<dbReference type="EMBL" id="CP001139">
    <property type="protein sequence ID" value="ACH64833.1"/>
    <property type="molecule type" value="Genomic_DNA"/>
</dbReference>
<dbReference type="RefSeq" id="WP_011262905.1">
    <property type="nucleotide sequence ID" value="NC_011184.1"/>
</dbReference>
<dbReference type="SMR" id="B5FDA8"/>
<dbReference type="GeneID" id="54165325"/>
<dbReference type="KEGG" id="vfm:VFMJ11_2710"/>
<dbReference type="HOGENOM" id="CLU_007831_2_2_6"/>
<dbReference type="Proteomes" id="UP000001857">
    <property type="component" value="Chromosome I"/>
</dbReference>
<dbReference type="GO" id="GO:0005829">
    <property type="term" value="C:cytosol"/>
    <property type="evidence" value="ECO:0007669"/>
    <property type="project" value="TreeGrafter"/>
</dbReference>
<dbReference type="GO" id="GO:0050660">
    <property type="term" value="F:flavin adenine dinucleotide binding"/>
    <property type="evidence" value="ECO:0007669"/>
    <property type="project" value="UniProtKB-UniRule"/>
</dbReference>
<dbReference type="GO" id="GO:0030488">
    <property type="term" value="P:tRNA methylation"/>
    <property type="evidence" value="ECO:0007669"/>
    <property type="project" value="TreeGrafter"/>
</dbReference>
<dbReference type="GO" id="GO:0002098">
    <property type="term" value="P:tRNA wobble uridine modification"/>
    <property type="evidence" value="ECO:0007669"/>
    <property type="project" value="InterPro"/>
</dbReference>
<dbReference type="FunFam" id="1.10.10.1800:FF:000001">
    <property type="entry name" value="tRNA uridine 5-carboxymethylaminomethyl modification enzyme MnmG"/>
    <property type="match status" value="1"/>
</dbReference>
<dbReference type="FunFam" id="1.10.150.570:FF:000001">
    <property type="entry name" value="tRNA uridine 5-carboxymethylaminomethyl modification enzyme MnmG"/>
    <property type="match status" value="1"/>
</dbReference>
<dbReference type="FunFam" id="3.50.50.60:FF:000002">
    <property type="entry name" value="tRNA uridine 5-carboxymethylaminomethyl modification enzyme MnmG"/>
    <property type="match status" value="1"/>
</dbReference>
<dbReference type="FunFam" id="3.50.50.60:FF:000010">
    <property type="entry name" value="tRNA uridine 5-carboxymethylaminomethyl modification enzyme MnmG"/>
    <property type="match status" value="1"/>
</dbReference>
<dbReference type="Gene3D" id="3.50.50.60">
    <property type="entry name" value="FAD/NAD(P)-binding domain"/>
    <property type="match status" value="2"/>
</dbReference>
<dbReference type="Gene3D" id="1.10.150.570">
    <property type="entry name" value="GidA associated domain, C-terminal subdomain"/>
    <property type="match status" value="1"/>
</dbReference>
<dbReference type="Gene3D" id="1.10.10.1800">
    <property type="entry name" value="tRNA uridine 5-carboxymethylaminomethyl modification enzyme MnmG/GidA"/>
    <property type="match status" value="1"/>
</dbReference>
<dbReference type="HAMAP" id="MF_00129">
    <property type="entry name" value="MnmG_GidA"/>
    <property type="match status" value="1"/>
</dbReference>
<dbReference type="InterPro" id="IPR036188">
    <property type="entry name" value="FAD/NAD-bd_sf"/>
</dbReference>
<dbReference type="InterPro" id="IPR049312">
    <property type="entry name" value="GIDA_C_N"/>
</dbReference>
<dbReference type="InterPro" id="IPR004416">
    <property type="entry name" value="MnmG"/>
</dbReference>
<dbReference type="InterPro" id="IPR002218">
    <property type="entry name" value="MnmG-rel"/>
</dbReference>
<dbReference type="InterPro" id="IPR020595">
    <property type="entry name" value="MnmG-rel_CS"/>
</dbReference>
<dbReference type="InterPro" id="IPR026904">
    <property type="entry name" value="MnmG_C"/>
</dbReference>
<dbReference type="InterPro" id="IPR047001">
    <property type="entry name" value="MnmG_C_subdom"/>
</dbReference>
<dbReference type="InterPro" id="IPR044920">
    <property type="entry name" value="MnmG_C_subdom_sf"/>
</dbReference>
<dbReference type="InterPro" id="IPR040131">
    <property type="entry name" value="MnmG_N"/>
</dbReference>
<dbReference type="NCBIfam" id="TIGR00136">
    <property type="entry name" value="mnmG_gidA"/>
    <property type="match status" value="1"/>
</dbReference>
<dbReference type="PANTHER" id="PTHR11806">
    <property type="entry name" value="GLUCOSE INHIBITED DIVISION PROTEIN A"/>
    <property type="match status" value="1"/>
</dbReference>
<dbReference type="PANTHER" id="PTHR11806:SF0">
    <property type="entry name" value="PROTEIN MTO1 HOMOLOG, MITOCHONDRIAL"/>
    <property type="match status" value="1"/>
</dbReference>
<dbReference type="Pfam" id="PF01134">
    <property type="entry name" value="GIDA"/>
    <property type="match status" value="1"/>
</dbReference>
<dbReference type="Pfam" id="PF21680">
    <property type="entry name" value="GIDA_C_1st"/>
    <property type="match status" value="1"/>
</dbReference>
<dbReference type="Pfam" id="PF13932">
    <property type="entry name" value="SAM_GIDA_C"/>
    <property type="match status" value="1"/>
</dbReference>
<dbReference type="SMART" id="SM01228">
    <property type="entry name" value="GIDA_assoc_3"/>
    <property type="match status" value="1"/>
</dbReference>
<dbReference type="SUPFAM" id="SSF51905">
    <property type="entry name" value="FAD/NAD(P)-binding domain"/>
    <property type="match status" value="1"/>
</dbReference>
<dbReference type="PROSITE" id="PS01280">
    <property type="entry name" value="GIDA_1"/>
    <property type="match status" value="1"/>
</dbReference>
<dbReference type="PROSITE" id="PS01281">
    <property type="entry name" value="GIDA_2"/>
    <property type="match status" value="1"/>
</dbReference>
<feature type="chain" id="PRO_1000095670" description="tRNA uridine 5-carboxymethylaminomethyl modification enzyme MnmG">
    <location>
        <begin position="1"/>
        <end position="629"/>
    </location>
</feature>
<feature type="binding site" evidence="1">
    <location>
        <begin position="13"/>
        <end position="18"/>
    </location>
    <ligand>
        <name>FAD</name>
        <dbReference type="ChEBI" id="CHEBI:57692"/>
    </ligand>
</feature>
<feature type="binding site" evidence="1">
    <location>
        <position position="125"/>
    </location>
    <ligand>
        <name>FAD</name>
        <dbReference type="ChEBI" id="CHEBI:57692"/>
    </ligand>
</feature>
<feature type="binding site" evidence="1">
    <location>
        <position position="180"/>
    </location>
    <ligand>
        <name>FAD</name>
        <dbReference type="ChEBI" id="CHEBI:57692"/>
    </ligand>
</feature>
<feature type="binding site" evidence="1">
    <location>
        <begin position="273"/>
        <end position="287"/>
    </location>
    <ligand>
        <name>NAD(+)</name>
        <dbReference type="ChEBI" id="CHEBI:57540"/>
    </ligand>
</feature>
<feature type="binding site" evidence="1">
    <location>
        <position position="370"/>
    </location>
    <ligand>
        <name>FAD</name>
        <dbReference type="ChEBI" id="CHEBI:57692"/>
    </ligand>
</feature>
<accession>B5FDA8</accession>
<proteinExistence type="inferred from homology"/>
<reference key="1">
    <citation type="submission" date="2008-08" db="EMBL/GenBank/DDBJ databases">
        <title>Complete sequence of Vibrio fischeri strain MJ11.</title>
        <authorList>
            <person name="Mandel M.J."/>
            <person name="Stabb E.V."/>
            <person name="Ruby E.G."/>
            <person name="Ferriera S."/>
            <person name="Johnson J."/>
            <person name="Kravitz S."/>
            <person name="Beeson K."/>
            <person name="Sutton G."/>
            <person name="Rogers Y.-H."/>
            <person name="Friedman R."/>
            <person name="Frazier M."/>
            <person name="Venter J.C."/>
        </authorList>
    </citation>
    <scope>NUCLEOTIDE SEQUENCE [LARGE SCALE GENOMIC DNA]</scope>
    <source>
        <strain>MJ11</strain>
    </source>
</reference>
<name>MNMG_ALIFM</name>
<keyword id="KW-0963">Cytoplasm</keyword>
<keyword id="KW-0274">FAD</keyword>
<keyword id="KW-0285">Flavoprotein</keyword>
<keyword id="KW-0520">NAD</keyword>
<keyword id="KW-0819">tRNA processing</keyword>
<comment type="function">
    <text evidence="1">NAD-binding protein involved in the addition of a carboxymethylaminomethyl (cmnm) group at the wobble position (U34) of certain tRNAs, forming tRNA-cmnm(5)s(2)U34.</text>
</comment>
<comment type="cofactor">
    <cofactor evidence="1">
        <name>FAD</name>
        <dbReference type="ChEBI" id="CHEBI:57692"/>
    </cofactor>
</comment>
<comment type="subunit">
    <text evidence="1">Homodimer. Heterotetramer of two MnmE and two MnmG subunits.</text>
</comment>
<comment type="subcellular location">
    <subcellularLocation>
        <location evidence="1">Cytoplasm</location>
    </subcellularLocation>
</comment>
<comment type="similarity">
    <text evidence="1">Belongs to the MnmG family.</text>
</comment>
<evidence type="ECO:0000255" key="1">
    <source>
        <dbReference type="HAMAP-Rule" id="MF_00129"/>
    </source>
</evidence>
<organism>
    <name type="scientific">Aliivibrio fischeri (strain MJ11)</name>
    <name type="common">Vibrio fischeri</name>
    <dbReference type="NCBI Taxonomy" id="388396"/>
    <lineage>
        <taxon>Bacteria</taxon>
        <taxon>Pseudomonadati</taxon>
        <taxon>Pseudomonadota</taxon>
        <taxon>Gammaproteobacteria</taxon>
        <taxon>Vibrionales</taxon>
        <taxon>Vibrionaceae</taxon>
        <taxon>Aliivibrio</taxon>
    </lineage>
</organism>
<protein>
    <recommendedName>
        <fullName evidence="1">tRNA uridine 5-carboxymethylaminomethyl modification enzyme MnmG</fullName>
    </recommendedName>
    <alternativeName>
        <fullName evidence="1">Glucose-inhibited division protein A</fullName>
    </alternativeName>
</protein>
<sequence length="629" mass="69799">MFYQDNFDVIVIGGGHAGTEAALAAARTGQNTLLLTHNIDTLGQMSCNPAIGGIGKGHLVKEVDALGGLMAQAIDHSGIQFRTLNASKGPAVRATRAQADRALYKAYVRSVLENQPNLTLFQQAVDDLIIENDKVMGAVTQMGLKFRAKSVVLTAGTFLGGQIHIGMENFSGGRAGDPSSITLAQRLRERPFRIDRLKTGTPPRIDARSVDFSGLEAQPGDNPTPVFSFLGKREHHPQQVNCFITHTNEKTHDVIRNNLDRSPMYAGVIEGIGPRYCPSIEDKVMRFADKDSHQIFIEPEGLSTHELYPNGISTSLPFDVQLQIVRSMKGFENAHIVRPGYAIEYDFFDPRDLKSTYETKFIEGLFFAGQINGTTGYEEAAAQGLMAGLNASLFAQGKEGWSPRRDEAYMGVLIDDLSTLGTKEPYRMFTSRAEYRLLLREDNADLRLTEQGRTLGLVDDVRWARFNEKVENMEQERQRLKDIWINPKSEQVDQVNAILKTPIAREASGEDLLRRPEVNYQSLVSIDGFGPALEDSQASEQVEIQVKYAGYIQRQRDEIEKSLRHENTKLPFDLDYKEVKGLSNEVVAKLSDAKPETIGIASRISGITPAAISILLVHLKKHGLLKKGE</sequence>
<gene>
    <name evidence="1" type="primary">mnmG</name>
    <name evidence="1" type="synonym">gidA</name>
    <name type="ordered locus">VFMJ11_2710</name>
</gene>